<name>KA20_TITSE</name>
<dbReference type="EMBL" id="GEUW01000075">
    <property type="protein sequence ID" value="JAW06970.1"/>
    <property type="molecule type" value="mRNA"/>
</dbReference>
<dbReference type="EMBL" id="GEUW01000044">
    <property type="protein sequence ID" value="JAW07001.1"/>
    <property type="molecule type" value="mRNA"/>
</dbReference>
<dbReference type="PDB" id="2LO7">
    <property type="method" value="NMR"/>
    <property type="chains" value="A=28-56"/>
</dbReference>
<dbReference type="PDBsum" id="2LO7"/>
<dbReference type="BMRB" id="P86271"/>
<dbReference type="SMR" id="P86271"/>
<dbReference type="EvolutionaryTrace" id="P86271"/>
<dbReference type="GO" id="GO:0005576">
    <property type="term" value="C:extracellular region"/>
    <property type="evidence" value="ECO:0007669"/>
    <property type="project" value="UniProtKB-SubCell"/>
</dbReference>
<dbReference type="GO" id="GO:0015459">
    <property type="term" value="F:potassium channel regulator activity"/>
    <property type="evidence" value="ECO:0007669"/>
    <property type="project" value="UniProtKB-KW"/>
</dbReference>
<dbReference type="GO" id="GO:0090729">
    <property type="term" value="F:toxin activity"/>
    <property type="evidence" value="ECO:0007669"/>
    <property type="project" value="UniProtKB-KW"/>
</dbReference>
<evidence type="ECO:0000250" key="1">
    <source>
        <dbReference type="UniProtKB" id="P0C183"/>
    </source>
</evidence>
<evidence type="ECO:0000255" key="2"/>
<evidence type="ECO:0000269" key="3">
    <source>
    </source>
</evidence>
<evidence type="ECO:0000269" key="4">
    <source ref="2"/>
</evidence>
<evidence type="ECO:0000303" key="5">
    <source>
    </source>
</evidence>
<evidence type="ECO:0000303" key="6">
    <source ref="2"/>
</evidence>
<evidence type="ECO:0000305" key="7"/>
<evidence type="ECO:0000312" key="8">
    <source>
        <dbReference type="EMBL" id="JAW06970.1"/>
    </source>
</evidence>
<evidence type="ECO:0000312" key="9">
    <source>
        <dbReference type="EMBL" id="JAW07001.1"/>
    </source>
</evidence>
<evidence type="ECO:0007744" key="10">
    <source>
        <dbReference type="PDB" id="2LO7"/>
    </source>
</evidence>
<evidence type="ECO:0007829" key="11">
    <source>
        <dbReference type="PDB" id="2LO7"/>
    </source>
</evidence>
<protein>
    <recommendedName>
        <fullName evidence="5 6">Potassium channel toxin Ts16</fullName>
    </recommendedName>
    <alternativeName>
        <fullName>Tityustoxin-16</fullName>
    </alternativeName>
</protein>
<reference evidence="8 9" key="1">
    <citation type="journal article" date="2018" name="PLoS ONE">
        <title>Proteomic endorsed transcriptomic profiles of venom glands from Tityus obscurus and T. serrulatus scorpions.</title>
        <authorList>
            <person name="de Oliveira U.C."/>
            <person name="Nishiyama M.Y. Jr."/>
            <person name="Dos Santos M.B.V."/>
            <person name="Santos-da-Silva A.P."/>
            <person name="Chalkidis H.M."/>
            <person name="Souza-Imberg A."/>
            <person name="Candido D.M."/>
            <person name="Yamanouye N."/>
            <person name="Dorce V.A.C."/>
            <person name="Junqueira-de-Azevedo I.L.M."/>
        </authorList>
    </citation>
    <scope>NUCLEOTIDE SEQUENCE [MRNA]</scope>
    <source>
        <tissue>Telson</tissue>
    </source>
</reference>
<reference key="2">
    <citation type="submission" date="2009-03" db="UniProtKB">
        <title>Isolation and primary structure of a new scorpion toxin from Tityus serrulatus venom.</title>
        <authorList>
            <person name="Bordon K.C.F."/>
            <person name="Varanda W.A."/>
            <person name="Arantes E.C."/>
        </authorList>
    </citation>
    <scope>PROTEIN SEQUENCE OF 28-56</scope>
    <scope>SUBCELLULAR LOCATION</scope>
    <source>
        <tissue>Venom</tissue>
    </source>
</reference>
<reference key="3">
    <citation type="journal article" date="2012" name="J. Biol. Chem.">
        <title>New tricks of an old pattern: structural versatility of scorpion toxins with common cysteine spacing.</title>
        <authorList>
            <person name="Saucedo A.L."/>
            <person name="Flores-Solis D."/>
            <person name="Rodriguez de la Vega R.C."/>
            <person name="Ramirez-Cordero B."/>
            <person name="Hernandez-Lopez R."/>
            <person name="Cano-Sanchez P."/>
            <person name="Noriega-Navarro R."/>
            <person name="Garcia-Valdes J."/>
            <person name="Coronas-Valderrama F."/>
            <person name="de Roodt A."/>
            <person name="Brieba L.G."/>
            <person name="Possani L.D."/>
            <person name="Del Rio-Portilla F."/>
        </authorList>
    </citation>
    <scope>MASS SPECTROMETRY</scope>
    <scope>DOMAIN</scope>
    <scope>DISULFIDE BONDS</scope>
    <scope>STRUCTURE BY NMR OF 28-56</scope>
</reference>
<organism>
    <name type="scientific">Tityus serrulatus</name>
    <name type="common">Brazilian scorpion</name>
    <dbReference type="NCBI Taxonomy" id="6887"/>
    <lineage>
        <taxon>Eukaryota</taxon>
        <taxon>Metazoa</taxon>
        <taxon>Ecdysozoa</taxon>
        <taxon>Arthropoda</taxon>
        <taxon>Chelicerata</taxon>
        <taxon>Arachnida</taxon>
        <taxon>Scorpiones</taxon>
        <taxon>Buthida</taxon>
        <taxon>Buthoidea</taxon>
        <taxon>Buthidae</taxon>
        <taxon>Tityus</taxon>
    </lineage>
</organism>
<keyword id="KW-0002">3D-structure</keyword>
<keyword id="KW-0903">Direct protein sequencing</keyword>
<keyword id="KW-1015">Disulfide bond</keyword>
<keyword id="KW-0872">Ion channel impairing toxin</keyword>
<keyword id="KW-0528">Neurotoxin</keyword>
<keyword id="KW-0632">Potassium channel impairing toxin</keyword>
<keyword id="KW-0964">Secreted</keyword>
<keyword id="KW-0732">Signal</keyword>
<keyword id="KW-0800">Toxin</keyword>
<proteinExistence type="evidence at protein level"/>
<accession>P86271</accession>
<accession>A0A218QX02</accession>
<sequence length="58" mass="6634">MHSSVFILILFSLAVINPIFFDMKVEAGCMKEYCAGQCRGKVSQDYCLKHCKCIPRFI</sequence>
<comment type="function">
    <text evidence="1">Blocks potassium channels.</text>
</comment>
<comment type="subcellular location">
    <subcellularLocation>
        <location evidence="4">Secreted</location>
    </subcellularLocation>
</comment>
<comment type="tissue specificity">
    <text evidence="7">Expressed by the venom gland.</text>
</comment>
<comment type="domain">
    <text evidence="3">Has the structural arrangement of two alpha-helices stabilized by disulfide bonds (CSalpha/alpha 3(S-S)).</text>
</comment>
<comment type="mass spectrometry" mass="3325.1" method="MALDI" evidence="3"/>
<comment type="similarity">
    <text evidence="2">Belongs to the short scorpion toxin superfamily. Potassium channel inhibitor family. Alpha-KTx 20 subfamily.</text>
</comment>
<comment type="caution">
    <text evidence="7">The sequence aligns with alpha-KTx but has the CSalpha/alpha scaffold of a kappa-KTx due to the unusual pattern of disulfide bonds. As is the method of choice in UniProtKB, the assignment to the alpha-KTx 20 subfamily is based purely on the primary structure.</text>
</comment>
<feature type="signal peptide" evidence="2">
    <location>
        <begin position="1"/>
        <end position="16"/>
    </location>
</feature>
<feature type="peptide" id="PRO_0000376049" description="Potassium channel toxin Ts16" evidence="4">
    <location>
        <begin position="17"/>
        <end position="58"/>
    </location>
</feature>
<feature type="disulfide bond" evidence="3 10">
    <location>
        <begin position="29"/>
        <end position="51"/>
    </location>
</feature>
<feature type="disulfide bond" evidence="3 10">
    <location>
        <begin position="34"/>
        <end position="47"/>
    </location>
</feature>
<feature type="disulfide bond" evidence="3 10">
    <location>
        <begin position="38"/>
        <end position="53"/>
    </location>
</feature>
<feature type="helix" evidence="11">
    <location>
        <begin position="31"/>
        <end position="37"/>
    </location>
</feature>
<feature type="helix" evidence="11">
    <location>
        <begin position="41"/>
        <end position="50"/>
    </location>
</feature>